<comment type="subcellular location">
    <subcellularLocation>
        <location evidence="1">Secreted</location>
    </subcellularLocation>
</comment>
<comment type="tissue specificity">
    <text evidence="4">Expressed by the venom duct.</text>
</comment>
<comment type="domain">
    <text evidence="3">The presence of a 'disulfide through disulfide knot' structurally defines this protein as a knottin.</text>
</comment>
<comment type="domain">
    <text evidence="3">The cysteine framework is VI/VII (C-C-CC-C-C).</text>
</comment>
<feature type="peptide" id="PRO_0000415056" description="Conotoxin Cl6d" evidence="1">
    <location>
        <begin position="1"/>
        <end position="34"/>
    </location>
</feature>
<feature type="modified residue" description="4-hydroxyproline" evidence="4">
    <location>
        <position position="14"/>
    </location>
</feature>
<feature type="modified residue" description="4-hydroxyproline" evidence="4">
    <location>
        <position position="21"/>
    </location>
</feature>
<feature type="disulfide bond" evidence="3">
    <location>
        <begin position="4"/>
        <end position="19"/>
    </location>
</feature>
<feature type="disulfide bond" evidence="3">
    <location>
        <begin position="12"/>
        <end position="29"/>
    </location>
</feature>
<feature type="disulfide bond" evidence="3">
    <location>
        <begin position="18"/>
        <end position="33"/>
    </location>
</feature>
<dbReference type="SMR" id="P0DJC0"/>
<dbReference type="GO" id="GO:0005576">
    <property type="term" value="C:extracellular region"/>
    <property type="evidence" value="ECO:0007669"/>
    <property type="project" value="UniProtKB-SubCell"/>
</dbReference>
<dbReference type="GO" id="GO:0090729">
    <property type="term" value="F:toxin activity"/>
    <property type="evidence" value="ECO:0007669"/>
    <property type="project" value="UniProtKB-KW"/>
</dbReference>
<proteinExistence type="evidence at protein level"/>
<name>U6D_CONCL</name>
<organism>
    <name type="scientific">Californiconus californicus</name>
    <name type="common">California cone</name>
    <name type="synonym">Conus californicus</name>
    <dbReference type="NCBI Taxonomy" id="1736779"/>
    <lineage>
        <taxon>Eukaryota</taxon>
        <taxon>Metazoa</taxon>
        <taxon>Spiralia</taxon>
        <taxon>Lophotrochozoa</taxon>
        <taxon>Mollusca</taxon>
        <taxon>Gastropoda</taxon>
        <taxon>Caenogastropoda</taxon>
        <taxon>Neogastropoda</taxon>
        <taxon>Conoidea</taxon>
        <taxon>Conidae</taxon>
        <taxon>Californiconus</taxon>
    </lineage>
</organism>
<keyword id="KW-0903">Direct protein sequencing</keyword>
<keyword id="KW-1015">Disulfide bond</keyword>
<keyword id="KW-0379">Hydroxylation</keyword>
<keyword id="KW-0960">Knottin</keyword>
<keyword id="KW-0528">Neurotoxin</keyword>
<keyword id="KW-0964">Secreted</keyword>
<keyword id="KW-0800">Toxin</keyword>
<evidence type="ECO:0000269" key="1">
    <source>
    </source>
</evidence>
<evidence type="ECO:0000303" key="2">
    <source>
    </source>
</evidence>
<evidence type="ECO:0000305" key="3"/>
<evidence type="ECO:0000305" key="4">
    <source>
    </source>
</evidence>
<protein>
    <recommendedName>
        <fullName evidence="2">Conotoxin Cl6d</fullName>
    </recommendedName>
    <alternativeName>
        <fullName evidence="3">Cal6.17b</fullName>
    </alternativeName>
</protein>
<sequence length="34" mass="3433">GDACSLLNGDDCGPGELCCTPSGDHQGTCETSCW</sequence>
<reference key="1">
    <citation type="journal article" date="2010" name="Mol. Phylogenet. Evol.">
        <title>Evolution of Conus peptide toxins: analysis of Conus californicus Reeve, 1844.</title>
        <authorList>
            <person name="Biggs J.S."/>
            <person name="Watkins M."/>
            <person name="Puillandre N."/>
            <person name="Ownby J.P."/>
            <person name="Lopez-Vera E."/>
            <person name="Christensen S."/>
            <person name="Moreno K.J."/>
            <person name="Bernaldez J."/>
            <person name="Licea-Navarro A."/>
            <person name="Corneli P.S."/>
            <person name="Olivera B.M."/>
        </authorList>
    </citation>
    <scope>PROTEIN SEQUENCE</scope>
    <scope>HYDROXYLATION AT PRO-14 AND PRO-21</scope>
    <scope>SUBCELLULAR LOCATION</scope>
    <source>
        <tissue>Venom</tissue>
    </source>
</reference>
<accession>P0DJC0</accession>